<organism>
    <name type="scientific">Homo sapiens</name>
    <name type="common">Human</name>
    <dbReference type="NCBI Taxonomy" id="9606"/>
    <lineage>
        <taxon>Eukaryota</taxon>
        <taxon>Metazoa</taxon>
        <taxon>Chordata</taxon>
        <taxon>Craniata</taxon>
        <taxon>Vertebrata</taxon>
        <taxon>Euteleostomi</taxon>
        <taxon>Mammalia</taxon>
        <taxon>Eutheria</taxon>
        <taxon>Euarchontoglires</taxon>
        <taxon>Primates</taxon>
        <taxon>Haplorrhini</taxon>
        <taxon>Catarrhini</taxon>
        <taxon>Hominidae</taxon>
        <taxon>Homo</taxon>
    </lineage>
</organism>
<proteinExistence type="evidence at protein level"/>
<evidence type="ECO:0000256" key="1">
    <source>
        <dbReference type="SAM" id="MobiDB-lite"/>
    </source>
</evidence>
<evidence type="ECO:0000269" key="2">
    <source>
    </source>
</evidence>
<evidence type="ECO:0000305" key="3"/>
<evidence type="ECO:0000312" key="4">
    <source>
        <dbReference type="HGNC" id="HGNC:22421"/>
    </source>
</evidence>
<evidence type="ECO:0007744" key="5">
    <source>
    </source>
</evidence>
<evidence type="ECO:0007744" key="6">
    <source>
    </source>
</evidence>
<evidence type="ECO:0007744" key="7">
    <source>
    </source>
</evidence>
<evidence type="ECO:0007744" key="8">
    <source>
    </source>
</evidence>
<sequence length="194" mass="22083">MAKQKRKVPEVTEKKNKKLKKASAEGPLLGPEAAPSGEGAGSKGEAVLRPGLDAEPELSPEEQRVLERKLKKERKKEERQRLREAGLVAQHPPARRSGAELALDYLCRWAQKHKNWRFQKTRQTWLLLHMYDSDKVPDEHFSTLLAYLEGLQGRARELTVQKAEALMRELDEEGSDPPLPGRAQRIRQVLQLLS</sequence>
<gene>
    <name evidence="4" type="primary">CHLSN</name>
    <name type="synonym">C7orf50</name>
    <name type="ORF">FP15621</name>
</gene>
<comment type="function">
    <text evidence="2">Hormone secreted from the intestine in response to cholesterol, where it acts to inhibit cholesterol synthesis in the liver and VLDL secretion,leading to a reduction in circulating cholesterol levels. Acts through binding to its receptor, GPR146.</text>
</comment>
<comment type="interaction">
    <interactant intactId="EBI-751612">
        <id>Q9BRJ6</id>
    </interactant>
    <interactant intactId="EBI-747754">
        <id>P28799</id>
        <label>GRN</label>
    </interactant>
    <organismsDiffer>false</organismsDiffer>
    <experiments>3</experiments>
</comment>
<comment type="interaction">
    <interactant intactId="EBI-751612">
        <id>Q9BRJ6</id>
    </interactant>
    <interactant intactId="EBI-466029">
        <id>P42858</id>
        <label>HTT</label>
    </interactant>
    <organismsDiffer>false</organismsDiffer>
    <experiments>6</experiments>
</comment>
<comment type="interaction">
    <interactant intactId="EBI-751612">
        <id>Q9BRJ6</id>
    </interactant>
    <interactant intactId="EBI-741515">
        <id>Q9NVV9</id>
        <label>THAP1</label>
    </interactant>
    <organismsDiffer>false</organismsDiffer>
    <experiments>6</experiments>
</comment>
<comment type="interaction">
    <interactant intactId="EBI-751612">
        <id>Q9BRJ6</id>
    </interactant>
    <interactant intactId="EBI-720609">
        <id>O76024</id>
        <label>WFS1</label>
    </interactant>
    <organismsDiffer>false</organismsDiffer>
    <experiments>3</experiments>
</comment>
<comment type="subcellular location">
    <subcellularLocation>
        <location evidence="2">Secreted</location>
    </subcellularLocation>
    <text evidence="2">Secreted via exosomes, secretion is induced by feeding and cholesterol absorption.</text>
</comment>
<comment type="tissue specificity">
    <text evidence="2">Secreted from the instestine, secretion is induced by feeding and cholesterol absorption.</text>
</comment>
<comment type="induction">
    <text evidence="2">Expression is induced by feeding and cholesterol absorption.</text>
</comment>
<reference key="1">
    <citation type="journal article" date="2004" name="Proc. Natl. Acad. Sci. U.S.A.">
        <title>Large-scale cDNA transfection screening for genes related to cancer development and progression.</title>
        <authorList>
            <person name="Wan D."/>
            <person name="Gong Y."/>
            <person name="Qin W."/>
            <person name="Zhang P."/>
            <person name="Li J."/>
            <person name="Wei L."/>
            <person name="Zhou X."/>
            <person name="Li H."/>
            <person name="Qiu X."/>
            <person name="Zhong F."/>
            <person name="He L."/>
            <person name="Yu J."/>
            <person name="Yao G."/>
            <person name="Jiang H."/>
            <person name="Qian L."/>
            <person name="Yu Y."/>
            <person name="Shu H."/>
            <person name="Chen X."/>
            <person name="Xu H."/>
            <person name="Guo M."/>
            <person name="Pan Z."/>
            <person name="Chen Y."/>
            <person name="Ge C."/>
            <person name="Yang S."/>
            <person name="Gu J."/>
        </authorList>
    </citation>
    <scope>NUCLEOTIDE SEQUENCE [LARGE SCALE MRNA]</scope>
</reference>
<reference key="2">
    <citation type="journal article" date="2004" name="Genome Res.">
        <title>The status, quality, and expansion of the NIH full-length cDNA project: the Mammalian Gene Collection (MGC).</title>
        <authorList>
            <consortium name="The MGC Project Team"/>
        </authorList>
    </citation>
    <scope>NUCLEOTIDE SEQUENCE [LARGE SCALE MRNA]</scope>
    <source>
        <tissue>Lung</tissue>
    </source>
</reference>
<reference key="3">
    <citation type="journal article" date="2008" name="Proc. Natl. Acad. Sci. U.S.A.">
        <title>A quantitative atlas of mitotic phosphorylation.</title>
        <authorList>
            <person name="Dephoure N."/>
            <person name="Zhou C."/>
            <person name="Villen J."/>
            <person name="Beausoleil S.A."/>
            <person name="Bakalarski C.E."/>
            <person name="Elledge S.J."/>
            <person name="Gygi S.P."/>
        </authorList>
    </citation>
    <scope>PHOSPHORYLATION [LARGE SCALE ANALYSIS] AT SER-23 AND SER-97</scope>
    <scope>IDENTIFICATION BY MASS SPECTROMETRY [LARGE SCALE ANALYSIS]</scope>
    <source>
        <tissue>Cervix carcinoma</tissue>
    </source>
</reference>
<reference key="4">
    <citation type="journal article" date="2010" name="Sci. Signal.">
        <title>Quantitative phosphoproteomics reveals widespread full phosphorylation site occupancy during mitosis.</title>
        <authorList>
            <person name="Olsen J.V."/>
            <person name="Vermeulen M."/>
            <person name="Santamaria A."/>
            <person name="Kumar C."/>
            <person name="Miller M.L."/>
            <person name="Jensen L.J."/>
            <person name="Gnad F."/>
            <person name="Cox J."/>
            <person name="Jensen T.S."/>
            <person name="Nigg E.A."/>
            <person name="Brunak S."/>
            <person name="Mann M."/>
        </authorList>
    </citation>
    <scope>PHOSPHORYLATION [LARGE SCALE ANALYSIS] AT SER-59 AND SER-97</scope>
    <scope>IDENTIFICATION BY MASS SPECTROMETRY [LARGE SCALE ANALYSIS]</scope>
    <source>
        <tissue>Cervix carcinoma</tissue>
    </source>
</reference>
<reference key="5">
    <citation type="journal article" date="2011" name="BMC Syst. Biol.">
        <title>Initial characterization of the human central proteome.</title>
        <authorList>
            <person name="Burkard T.R."/>
            <person name="Planyavsky M."/>
            <person name="Kaupe I."/>
            <person name="Breitwieser F.P."/>
            <person name="Buerckstuemmer T."/>
            <person name="Bennett K.L."/>
            <person name="Superti-Furga G."/>
            <person name="Colinge J."/>
        </authorList>
    </citation>
    <scope>IDENTIFICATION BY MASS SPECTROMETRY [LARGE SCALE ANALYSIS]</scope>
</reference>
<reference key="6">
    <citation type="journal article" date="2011" name="Sci. Signal.">
        <title>System-wide temporal characterization of the proteome and phosphoproteome of human embryonic stem cell differentiation.</title>
        <authorList>
            <person name="Rigbolt K.T."/>
            <person name="Prokhorova T.A."/>
            <person name="Akimov V."/>
            <person name="Henningsen J."/>
            <person name="Johansen P.T."/>
            <person name="Kratchmarova I."/>
            <person name="Kassem M."/>
            <person name="Mann M."/>
            <person name="Olsen J.V."/>
            <person name="Blagoev B."/>
        </authorList>
    </citation>
    <scope>PHOSPHORYLATION [LARGE SCALE ANALYSIS] AT SER-59 AND SER-175</scope>
    <scope>IDENTIFICATION BY MASS SPECTROMETRY [LARGE SCALE ANALYSIS]</scope>
</reference>
<reference key="7">
    <citation type="journal article" date="2013" name="J. Proteome Res.">
        <title>Toward a comprehensive characterization of a human cancer cell phosphoproteome.</title>
        <authorList>
            <person name="Zhou H."/>
            <person name="Di Palma S."/>
            <person name="Preisinger C."/>
            <person name="Peng M."/>
            <person name="Polat A.N."/>
            <person name="Heck A.J."/>
            <person name="Mohammed S."/>
        </authorList>
    </citation>
    <scope>PHOSPHORYLATION [LARGE SCALE ANALYSIS] AT SER-59 AND SER-175</scope>
    <scope>IDENTIFICATION BY MASS SPECTROMETRY [LARGE SCALE ANALYSIS]</scope>
    <source>
        <tissue>Cervix carcinoma</tissue>
        <tissue>Erythroleukemia</tissue>
    </source>
</reference>
<reference key="8">
    <citation type="journal article" date="2024" name="Cell">
        <title>A gut-derived hormone regulates cholesterol metabolism.</title>
        <authorList>
            <person name="Hu X."/>
            <person name="Chen F."/>
            <person name="Jia L."/>
            <person name="Long A."/>
            <person name="Peng Y."/>
            <person name="Li X."/>
            <person name="Huang J."/>
            <person name="Wei X."/>
            <person name="Fang X."/>
            <person name="Gao Z."/>
            <person name="Zhang M."/>
            <person name="Liu X."/>
            <person name="Chen Y.G."/>
            <person name="Wang Y."/>
            <person name="Zhang H."/>
            <person name="Wang Y."/>
        </authorList>
    </citation>
    <scope>FUNCTION</scope>
    <scope>TISSUE SPECIFICITY</scope>
    <scope>SUBCELLULAR LOCATION</scope>
    <scope>INDUCTION BY CHOLESTEROL</scope>
</reference>
<dbReference type="EMBL" id="AF495721">
    <property type="protein sequence ID" value="AAQ06675.1"/>
    <property type="molecule type" value="mRNA"/>
</dbReference>
<dbReference type="EMBL" id="BC006224">
    <property type="protein sequence ID" value="AAH06224.1"/>
    <property type="molecule type" value="mRNA"/>
</dbReference>
<dbReference type="CCDS" id="CCDS5320.1"/>
<dbReference type="RefSeq" id="NP_001127867.1">
    <property type="nucleotide sequence ID" value="NM_001134395.1"/>
</dbReference>
<dbReference type="RefSeq" id="NP_001127868.1">
    <property type="nucleotide sequence ID" value="NM_001134396.1"/>
</dbReference>
<dbReference type="RefSeq" id="NP_001305181.1">
    <property type="nucleotide sequence ID" value="NM_001318252.2"/>
</dbReference>
<dbReference type="RefSeq" id="NP_001411262.1">
    <property type="nucleotide sequence ID" value="NM_001424333.1"/>
</dbReference>
<dbReference type="RefSeq" id="NP_001411263.1">
    <property type="nucleotide sequence ID" value="NM_001424334.1"/>
</dbReference>
<dbReference type="RefSeq" id="NP_115726.1">
    <property type="nucleotide sequence ID" value="NM_032350.5"/>
</dbReference>
<dbReference type="SMR" id="Q9BRJ6"/>
<dbReference type="BioGRID" id="124036">
    <property type="interactions" value="437"/>
</dbReference>
<dbReference type="FunCoup" id="Q9BRJ6">
    <property type="interactions" value="836"/>
</dbReference>
<dbReference type="IntAct" id="Q9BRJ6">
    <property type="interactions" value="129"/>
</dbReference>
<dbReference type="MINT" id="Q9BRJ6"/>
<dbReference type="STRING" id="9606.ENSP00000380286"/>
<dbReference type="GlyGen" id="Q9BRJ6">
    <property type="glycosylation" value="1 site, 1 O-linked glycan (1 site)"/>
</dbReference>
<dbReference type="iPTMnet" id="Q9BRJ6"/>
<dbReference type="PhosphoSitePlus" id="Q9BRJ6"/>
<dbReference type="SwissPalm" id="Q9BRJ6"/>
<dbReference type="BioMuta" id="C7orf50"/>
<dbReference type="DMDM" id="74732893"/>
<dbReference type="jPOST" id="Q9BRJ6"/>
<dbReference type="MassIVE" id="Q9BRJ6"/>
<dbReference type="PaxDb" id="9606-ENSP00000380286"/>
<dbReference type="PeptideAtlas" id="Q9BRJ6"/>
<dbReference type="ProteomicsDB" id="78770"/>
<dbReference type="Pumba" id="Q9BRJ6"/>
<dbReference type="Antibodypedia" id="43531">
    <property type="antibodies" value="124 antibodies from 25 providers"/>
</dbReference>
<dbReference type="DNASU" id="84310"/>
<dbReference type="Ensembl" id="ENST00000357429.10">
    <property type="protein sequence ID" value="ENSP00000350011.5"/>
    <property type="gene ID" value="ENSG00000146540.15"/>
</dbReference>
<dbReference type="Ensembl" id="ENST00000397098.8">
    <property type="protein sequence ID" value="ENSP00000380286.3"/>
    <property type="gene ID" value="ENSG00000146540.15"/>
</dbReference>
<dbReference type="Ensembl" id="ENST00000397100.6">
    <property type="protein sequence ID" value="ENSP00000380288.2"/>
    <property type="gene ID" value="ENSG00000146540.15"/>
</dbReference>
<dbReference type="GeneID" id="84310"/>
<dbReference type="KEGG" id="hsa:84310"/>
<dbReference type="MANE-Select" id="ENST00000397098.8">
    <property type="protein sequence ID" value="ENSP00000380286.3"/>
    <property type="RefSeq nucleotide sequence ID" value="NM_001318252.2"/>
    <property type="RefSeq protein sequence ID" value="NP_001305181.1"/>
</dbReference>
<dbReference type="UCSC" id="uc003sju.3">
    <property type="organism name" value="human"/>
</dbReference>
<dbReference type="AGR" id="HGNC:22421"/>
<dbReference type="CTD" id="84310"/>
<dbReference type="DisGeNET" id="84310"/>
<dbReference type="GeneCards" id="CHLSN"/>
<dbReference type="HGNC" id="HGNC:22421">
    <property type="gene designation" value="CHLSN"/>
</dbReference>
<dbReference type="HPA" id="ENSG00000146540">
    <property type="expression patterns" value="Low tissue specificity"/>
</dbReference>
<dbReference type="neXtProt" id="NX_Q9BRJ6"/>
<dbReference type="OpenTargets" id="ENSG00000146540"/>
<dbReference type="PharmGKB" id="PA162380546"/>
<dbReference type="VEuPathDB" id="HostDB:ENSG00000146540"/>
<dbReference type="eggNOG" id="KOG4829">
    <property type="taxonomic scope" value="Eukaryota"/>
</dbReference>
<dbReference type="GeneTree" id="ENSGT00390000017838"/>
<dbReference type="HOGENOM" id="CLU_091382_1_0_1"/>
<dbReference type="InParanoid" id="Q9BRJ6"/>
<dbReference type="OMA" id="CWAENRS"/>
<dbReference type="OrthoDB" id="10261563at2759"/>
<dbReference type="PAN-GO" id="Q9BRJ6">
    <property type="GO annotations" value="0 GO annotations based on evolutionary models"/>
</dbReference>
<dbReference type="PhylomeDB" id="Q9BRJ6"/>
<dbReference type="TreeFam" id="TF326634"/>
<dbReference type="PathwayCommons" id="Q9BRJ6"/>
<dbReference type="SignaLink" id="Q9BRJ6"/>
<dbReference type="SIGNOR" id="Q9BRJ6"/>
<dbReference type="BioGRID-ORCS" id="84310">
    <property type="hits" value="143 hits in 1143 CRISPR screens"/>
</dbReference>
<dbReference type="CD-CODE" id="91857CE7">
    <property type="entry name" value="Nucleolus"/>
</dbReference>
<dbReference type="ChiTaRS" id="C7orf50">
    <property type="organism name" value="human"/>
</dbReference>
<dbReference type="GenomeRNAi" id="84310"/>
<dbReference type="Pharos" id="Q9BRJ6">
    <property type="development level" value="Tbio"/>
</dbReference>
<dbReference type="PRO" id="PR:Q9BRJ6"/>
<dbReference type="Proteomes" id="UP000005640">
    <property type="component" value="Chromosome 7"/>
</dbReference>
<dbReference type="RNAct" id="Q9BRJ6">
    <property type="molecule type" value="protein"/>
</dbReference>
<dbReference type="Bgee" id="ENSG00000146540">
    <property type="expression patterns" value="Expressed in adenohypophysis and 173 other cell types or tissues"/>
</dbReference>
<dbReference type="ExpressionAtlas" id="Q9BRJ6">
    <property type="expression patterns" value="baseline and differential"/>
</dbReference>
<dbReference type="GO" id="GO:0005615">
    <property type="term" value="C:extracellular space"/>
    <property type="evidence" value="ECO:0000314"/>
    <property type="project" value="UniProt"/>
</dbReference>
<dbReference type="GO" id="GO:0005179">
    <property type="term" value="F:hormone activity"/>
    <property type="evidence" value="ECO:0000314"/>
    <property type="project" value="UniProt"/>
</dbReference>
<dbReference type="GO" id="GO:0003723">
    <property type="term" value="F:RNA binding"/>
    <property type="evidence" value="ECO:0007005"/>
    <property type="project" value="UniProtKB"/>
</dbReference>
<dbReference type="GO" id="GO:0045541">
    <property type="term" value="P:negative regulation of cholesterol biosynthetic process"/>
    <property type="evidence" value="ECO:0000314"/>
    <property type="project" value="UniProt"/>
</dbReference>
<dbReference type="InterPro" id="IPR019327">
    <property type="entry name" value="WKF"/>
</dbReference>
<dbReference type="PANTHER" id="PTHR22306">
    <property type="entry name" value="CHROMOSOME 7 OPEN READING FRAME 50"/>
    <property type="match status" value="1"/>
</dbReference>
<dbReference type="PANTHER" id="PTHR22306:SF2">
    <property type="entry name" value="CHROMOSOME 7 OPEN READING FRAME 50"/>
    <property type="match status" value="1"/>
</dbReference>
<dbReference type="Pfam" id="PF10180">
    <property type="entry name" value="WKF"/>
    <property type="match status" value="1"/>
</dbReference>
<name>CHOLN_HUMAN</name>
<keyword id="KW-0597">Phosphoprotein</keyword>
<keyword id="KW-1267">Proteomics identification</keyword>
<keyword id="KW-1185">Reference proteome</keyword>
<keyword id="KW-0964">Secreted</keyword>
<feature type="chain" id="PRO_0000309510" description="Protein cholesin">
    <location>
        <begin position="1"/>
        <end position="194"/>
    </location>
</feature>
<feature type="region of interest" description="Disordered" evidence="1">
    <location>
        <begin position="1"/>
        <end position="83"/>
    </location>
</feature>
<feature type="compositionally biased region" description="Basic and acidic residues" evidence="1">
    <location>
        <begin position="61"/>
        <end position="83"/>
    </location>
</feature>
<feature type="modified residue" description="Phosphoserine" evidence="5">
    <location>
        <position position="23"/>
    </location>
</feature>
<feature type="modified residue" description="Phosphoserine" evidence="6 7 8">
    <location>
        <position position="59"/>
    </location>
</feature>
<feature type="modified residue" description="Phosphoserine" evidence="5 6">
    <location>
        <position position="97"/>
    </location>
</feature>
<feature type="modified residue" description="Phosphoserine" evidence="7 8">
    <location>
        <position position="175"/>
    </location>
</feature>
<protein>
    <recommendedName>
        <fullName evidence="3">Protein cholesin</fullName>
    </recommendedName>
</protein>
<accession>Q9BRJ6</accession>